<accession>Q8ESS1</accession>
<organism>
    <name type="scientific">Oceanobacillus iheyensis (strain DSM 14371 / CIP 107618 / JCM 11309 / KCTC 3954 / HTE831)</name>
    <dbReference type="NCBI Taxonomy" id="221109"/>
    <lineage>
        <taxon>Bacteria</taxon>
        <taxon>Bacillati</taxon>
        <taxon>Bacillota</taxon>
        <taxon>Bacilli</taxon>
        <taxon>Bacillales</taxon>
        <taxon>Bacillaceae</taxon>
        <taxon>Oceanobacillus</taxon>
    </lineage>
</organism>
<feature type="chain" id="PRO_0000142029" description="1-(5-phosphoribosyl)-5-[(5-phosphoribosylamino)methylideneamino] imidazole-4-carboxamide isomerase">
    <location>
        <begin position="1"/>
        <end position="240"/>
    </location>
</feature>
<feature type="active site" description="Proton acceptor" evidence="1">
    <location>
        <position position="8"/>
    </location>
</feature>
<feature type="active site" description="Proton donor" evidence="1">
    <location>
        <position position="129"/>
    </location>
</feature>
<name>HIS4_OCEIH</name>
<comment type="catalytic activity">
    <reaction evidence="1">
        <text>1-(5-phospho-beta-D-ribosyl)-5-[(5-phospho-beta-D-ribosylamino)methylideneamino]imidazole-4-carboxamide = 5-[(5-phospho-1-deoxy-D-ribulos-1-ylimino)methylamino]-1-(5-phospho-beta-D-ribosyl)imidazole-4-carboxamide</text>
        <dbReference type="Rhea" id="RHEA:15469"/>
        <dbReference type="ChEBI" id="CHEBI:58435"/>
        <dbReference type="ChEBI" id="CHEBI:58525"/>
        <dbReference type="EC" id="5.3.1.16"/>
    </reaction>
</comment>
<comment type="pathway">
    <text evidence="1">Amino-acid biosynthesis; L-histidine biosynthesis; L-histidine from 5-phospho-alpha-D-ribose 1-diphosphate: step 4/9.</text>
</comment>
<comment type="subcellular location">
    <subcellularLocation>
        <location evidence="1">Cytoplasm</location>
    </subcellularLocation>
</comment>
<comment type="similarity">
    <text evidence="1">Belongs to the HisA/HisF family.</text>
</comment>
<dbReference type="EC" id="5.3.1.16" evidence="1"/>
<dbReference type="EMBL" id="BA000028">
    <property type="protein sequence ID" value="BAC12504.1"/>
    <property type="molecule type" value="Genomic_DNA"/>
</dbReference>
<dbReference type="RefSeq" id="WP_011064951.1">
    <property type="nucleotide sequence ID" value="NC_004193.1"/>
</dbReference>
<dbReference type="SMR" id="Q8ESS1"/>
<dbReference type="STRING" id="221109.gene:10732752"/>
<dbReference type="KEGG" id="oih:OB0548"/>
<dbReference type="eggNOG" id="COG0106">
    <property type="taxonomic scope" value="Bacteria"/>
</dbReference>
<dbReference type="HOGENOM" id="CLU_048577_1_1_9"/>
<dbReference type="OrthoDB" id="9807749at2"/>
<dbReference type="PhylomeDB" id="Q8ESS1"/>
<dbReference type="UniPathway" id="UPA00031">
    <property type="reaction ID" value="UER00009"/>
</dbReference>
<dbReference type="Proteomes" id="UP000000822">
    <property type="component" value="Chromosome"/>
</dbReference>
<dbReference type="GO" id="GO:0005737">
    <property type="term" value="C:cytoplasm"/>
    <property type="evidence" value="ECO:0007669"/>
    <property type="project" value="UniProtKB-SubCell"/>
</dbReference>
<dbReference type="GO" id="GO:0003949">
    <property type="term" value="F:1-(5-phosphoribosyl)-5-[(5-phosphoribosylamino)methylideneamino]imidazole-4-carboxamide isomerase activity"/>
    <property type="evidence" value="ECO:0007669"/>
    <property type="project" value="UniProtKB-UniRule"/>
</dbReference>
<dbReference type="GO" id="GO:0000105">
    <property type="term" value="P:L-histidine biosynthetic process"/>
    <property type="evidence" value="ECO:0007669"/>
    <property type="project" value="UniProtKB-UniRule"/>
</dbReference>
<dbReference type="GO" id="GO:0000162">
    <property type="term" value="P:L-tryptophan biosynthetic process"/>
    <property type="evidence" value="ECO:0007669"/>
    <property type="project" value="TreeGrafter"/>
</dbReference>
<dbReference type="CDD" id="cd04732">
    <property type="entry name" value="HisA"/>
    <property type="match status" value="1"/>
</dbReference>
<dbReference type="FunFam" id="3.20.20.70:FF:000009">
    <property type="entry name" value="1-(5-phosphoribosyl)-5-[(5-phosphoribosylamino)methylideneamino] imidazole-4-carboxamide isomerase"/>
    <property type="match status" value="1"/>
</dbReference>
<dbReference type="Gene3D" id="3.20.20.70">
    <property type="entry name" value="Aldolase class I"/>
    <property type="match status" value="1"/>
</dbReference>
<dbReference type="HAMAP" id="MF_01014">
    <property type="entry name" value="HisA"/>
    <property type="match status" value="1"/>
</dbReference>
<dbReference type="InterPro" id="IPR013785">
    <property type="entry name" value="Aldolase_TIM"/>
</dbReference>
<dbReference type="InterPro" id="IPR006062">
    <property type="entry name" value="His_biosynth"/>
</dbReference>
<dbReference type="InterPro" id="IPR006063">
    <property type="entry name" value="HisA_bact_arch"/>
</dbReference>
<dbReference type="InterPro" id="IPR044524">
    <property type="entry name" value="Isoase_HisA-like"/>
</dbReference>
<dbReference type="InterPro" id="IPR023016">
    <property type="entry name" value="Isoase_HisA-like_bact"/>
</dbReference>
<dbReference type="InterPro" id="IPR011060">
    <property type="entry name" value="RibuloseP-bd_barrel"/>
</dbReference>
<dbReference type="NCBIfam" id="TIGR00007">
    <property type="entry name" value="1-(5-phosphoribosyl)-5-[(5-phosphoribosylamino)methylideneamino]imidazole-4-carboxamide isomerase"/>
    <property type="match status" value="1"/>
</dbReference>
<dbReference type="PANTHER" id="PTHR43090">
    <property type="entry name" value="1-(5-PHOSPHORIBOSYL)-5-[(5-PHOSPHORIBOSYLAMINO)METHYLIDENEAMINO] IMIDAZOLE-4-CARBOXAMIDE ISOMERASE"/>
    <property type="match status" value="1"/>
</dbReference>
<dbReference type="PANTHER" id="PTHR43090:SF2">
    <property type="entry name" value="1-(5-PHOSPHORIBOSYL)-5-[(5-PHOSPHORIBOSYLAMINO)METHYLIDENEAMINO] IMIDAZOLE-4-CARBOXAMIDE ISOMERASE"/>
    <property type="match status" value="1"/>
</dbReference>
<dbReference type="Pfam" id="PF00977">
    <property type="entry name" value="His_biosynth"/>
    <property type="match status" value="1"/>
</dbReference>
<dbReference type="SUPFAM" id="SSF51366">
    <property type="entry name" value="Ribulose-phoshate binding barrel"/>
    <property type="match status" value="1"/>
</dbReference>
<keyword id="KW-0028">Amino-acid biosynthesis</keyword>
<keyword id="KW-0963">Cytoplasm</keyword>
<keyword id="KW-0368">Histidine biosynthesis</keyword>
<keyword id="KW-0413">Isomerase</keyword>
<keyword id="KW-1185">Reference proteome</keyword>
<protein>
    <recommendedName>
        <fullName evidence="1">1-(5-phosphoribosyl)-5-[(5-phosphoribosylamino)methylideneamino] imidazole-4-carboxamide isomerase</fullName>
        <ecNumber evidence="1">5.3.1.16</ecNumber>
    </recommendedName>
    <alternativeName>
        <fullName evidence="1">Phosphoribosylformimino-5-aminoimidazole carboxamide ribotide isomerase</fullName>
    </alternativeName>
</protein>
<reference key="1">
    <citation type="journal article" date="2002" name="Nucleic Acids Res.">
        <title>Genome sequence of Oceanobacillus iheyensis isolated from the Iheya Ridge and its unexpected adaptive capabilities to extreme environments.</title>
        <authorList>
            <person name="Takami H."/>
            <person name="Takaki Y."/>
            <person name="Uchiyama I."/>
        </authorList>
    </citation>
    <scope>NUCLEOTIDE SEQUENCE [LARGE SCALE GENOMIC DNA]</scope>
    <source>
        <strain>DSM 14371 / CIP 107618 / JCM 11309 / KCTC 3954 / HTE831</strain>
    </source>
</reference>
<evidence type="ECO:0000255" key="1">
    <source>
        <dbReference type="HAMAP-Rule" id="MF_01014"/>
    </source>
</evidence>
<sequence>MIIFPAIDIRNGKCVRLRQGDYNQETIYSNSPVEMAKEWEASGAEYLHTVDLDGAKSGESNNINIIQDVAQALSIPIQVGGGIRSLEVIDKYIQAGVSRVILGTAAITDSVFLQTAVESYAEKIAVSIDARNGFIATDGWTKNSTVEAIPFIKQLESIGVKTIIYTDILKDGMMSGPNFQELDAVQQATTMNIIASGGVTTEKDVQQLKTMNLYGAIIGKALYDGSIKLQDILEGEMDAR</sequence>
<gene>
    <name evidence="1" type="primary">hisA</name>
    <name type="ordered locus">OB0548</name>
</gene>
<proteinExistence type="inferred from homology"/>